<gene>
    <name type="primary">ORM2</name>
    <name type="synonym">AGP2</name>
</gene>
<proteinExistence type="evidence at protein level"/>
<organism>
    <name type="scientific">Homo sapiens</name>
    <name type="common">Human</name>
    <dbReference type="NCBI Taxonomy" id="9606"/>
    <lineage>
        <taxon>Eukaryota</taxon>
        <taxon>Metazoa</taxon>
        <taxon>Chordata</taxon>
        <taxon>Craniata</taxon>
        <taxon>Vertebrata</taxon>
        <taxon>Euteleostomi</taxon>
        <taxon>Mammalia</taxon>
        <taxon>Eutheria</taxon>
        <taxon>Euarchontoglires</taxon>
        <taxon>Primates</taxon>
        <taxon>Haplorrhini</taxon>
        <taxon>Catarrhini</taxon>
        <taxon>Hominidae</taxon>
        <taxon>Homo</taxon>
    </lineage>
</organism>
<protein>
    <recommendedName>
        <fullName>Alpha-1-acid glycoprotein 2</fullName>
        <shortName>AGP 2</shortName>
    </recommendedName>
    <alternativeName>
        <fullName>Orosomucoid-2</fullName>
        <shortName>OMD 2</shortName>
    </alternativeName>
</protein>
<name>A1AG2_HUMAN</name>
<sequence>MALSWVLTVLSLLPLLEAQIPLCANLVPVPITNATLDRITGKWFYIASAFRNEEYNKSVQEIQATFFYFTPNKTEDTIFLREYQTRQNQCFYNSSYLNVQRENGTVSRYEGGREHVAHLLFLRDTKTLMFGSYLDDEKNWGLSFYADKPETTKEQLGEFYEALDCLCIPRSDVMYTDWKKDKCEPLEKQHEKERKQEEGES</sequence>
<comment type="function">
    <text evidence="8">Functions as a transport protein in the blood stream. Binds various hydrophobic ligands in the interior of its beta-barrel domain. Also binds synthetic drugs and influences their distribution and availability. Appears to function in modulating the activity of the immune system during the acute-phase reaction.</text>
</comment>
<comment type="interaction">
    <interactant intactId="EBI-3911979">
        <id>P19652</id>
    </interactant>
    <interactant intactId="EBI-976767">
        <id>P02763</id>
        <label>ORM1</label>
    </interactant>
    <organismsDiffer>false</organismsDiffer>
    <experiments>4</experiments>
</comment>
<comment type="subcellular location">
    <subcellularLocation>
        <location>Secreted</location>
    </subcellularLocation>
</comment>
<comment type="tissue specificity">
    <text>Expressed by the liver and secreted in plasma.</text>
</comment>
<comment type="induction">
    <text>Synthesis is controlled by glucocorticoids, interleukin-1 and interleukin-6, It increases 5- to 50-fold upon inflammation.</text>
</comment>
<comment type="domain">
    <text evidence="8">Contains a beta-barrel that binds various ligands in its interior.</text>
</comment>
<comment type="PTM">
    <text evidence="1 2 3 4 5 6 7 9">N-glycosylated. N-glycan heterogeneity at Asn-33: Hex5HexNAc4 (minor), Hex6HexNAc5 (major) and dHex1Hex6HexNAc5 (minor).</text>
</comment>
<comment type="polymorphism">
    <text>Many different variants of ORM2 are known.</text>
</comment>
<comment type="similarity">
    <text evidence="10">Belongs to the calycin superfamily. Lipocalin family.</text>
</comment>
<comment type="sequence caution" evidence="10">
    <conflict type="erroneous gene model prediction">
        <sequence resource="EMBL-CDS" id="CAA29873"/>
    </conflict>
</comment>
<comment type="sequence caution" evidence="10">
    <conflict type="erroneous gene model prediction">
        <sequence resource="EMBL-CDS" id="CAA29874"/>
    </conflict>
</comment>
<feature type="signal peptide">
    <location>
        <begin position="1"/>
        <end position="18"/>
    </location>
</feature>
<feature type="chain" id="PRO_0000017861" description="Alpha-1-acid glycoprotein 2">
    <location>
        <begin position="19"/>
        <end position="201"/>
    </location>
</feature>
<feature type="modified residue" description="Pyrrolidone carboxylic acid" evidence="3">
    <location>
        <position position="19"/>
    </location>
</feature>
<feature type="glycosylation site" description="N-linked (GlcNAc...) (complex) asparagine" evidence="1 2 3 4 5 6 7 9">
    <location>
        <position position="33"/>
    </location>
</feature>
<feature type="glycosylation site" description="N-linked (GlcNAc...) asparagine" evidence="1 4 5 6">
    <location>
        <position position="56"/>
    </location>
</feature>
<feature type="glycosylation site" description="N-linked (GlcNAc...) asparagine" evidence="1 4 5">
    <location>
        <position position="72"/>
    </location>
</feature>
<feature type="glycosylation site" description="N-linked (GlcNAc...) asparagine" evidence="1 3 4 5 6">
    <location>
        <position position="93"/>
    </location>
</feature>
<feature type="glycosylation site" id="CAR_000171" description="N-linked (GlcNAc...) asparagine" evidence="4 5 6">
    <location>
        <position position="103"/>
    </location>
</feature>
<feature type="disulfide bond">
    <location>
        <begin position="23"/>
        <end position="165"/>
    </location>
</feature>
<feature type="disulfide bond">
    <location>
        <begin position="90"/>
        <end position="183"/>
    </location>
</feature>
<feature type="sequence variant" id="VAR_014667" description="In dbSNP:rs147969317.">
    <original>R</original>
    <variation>Q</variation>
    <location>
        <position position="38"/>
    </location>
</feature>
<feature type="sequence variant" id="VAR_050172" description="In dbSNP:rs2636889.">
    <original>V</original>
    <variation>A</variation>
    <location>
        <position position="99"/>
    </location>
</feature>
<feature type="sequence variant" id="VAR_050173" description="In dbSNP:rs12685968.">
    <original>G</original>
    <variation>R</variation>
    <location>
        <position position="141"/>
    </location>
</feature>
<feature type="sequence variant" id="VAR_050174" description="In dbSNP:rs1126777.">
    <original>C</original>
    <variation>R</variation>
    <location>
        <position position="167"/>
    </location>
</feature>
<feature type="sequence variant" id="VAR_050175" description="In dbSNP:rs2636890.">
    <original>M</original>
    <variation>V</variation>
    <location>
        <position position="174"/>
    </location>
</feature>
<feature type="sequence conflict" description="In Ref. 4; CAG33211." evidence="10" ref="4">
    <original>T</original>
    <variation>I</variation>
    <location>
        <position position="32"/>
    </location>
</feature>
<feature type="sequence conflict" description="In Ref. 3; BAG35159." evidence="10" ref="3">
    <original>E</original>
    <variation>D</variation>
    <location>
        <position position="102"/>
    </location>
</feature>
<feature type="sequence conflict" description="In Ref. 3; BAG35159." evidence="10" ref="3">
    <original>T</original>
    <variation>I</variation>
    <location>
        <position position="125"/>
    </location>
</feature>
<feature type="sequence conflict" description="In Ref. 3; BAG35159." evidence="10" ref="3">
    <original>A</original>
    <variation>V</variation>
    <location>
        <position position="162"/>
    </location>
</feature>
<feature type="sequence conflict" description="In Ref. 3; BAG35159." evidence="10" ref="3">
    <original>Q</original>
    <variation>H</variation>
    <location>
        <position position="189"/>
    </location>
</feature>
<feature type="turn" evidence="12">
    <location>
        <begin position="20"/>
        <end position="23"/>
    </location>
</feature>
<feature type="helix" evidence="11">
    <location>
        <begin position="24"/>
        <end position="26"/>
    </location>
</feature>
<feature type="helix" evidence="13">
    <location>
        <begin position="33"/>
        <end position="39"/>
    </location>
</feature>
<feature type="strand" evidence="13">
    <location>
        <begin position="41"/>
        <end position="51"/>
    </location>
</feature>
<feature type="helix" evidence="13">
    <location>
        <begin position="53"/>
        <end position="59"/>
    </location>
</feature>
<feature type="strand" evidence="13">
    <location>
        <begin position="62"/>
        <end position="72"/>
    </location>
</feature>
<feature type="turn" evidence="13">
    <location>
        <begin position="73"/>
        <end position="76"/>
    </location>
</feature>
<feature type="strand" evidence="13">
    <location>
        <begin position="77"/>
        <end position="86"/>
    </location>
</feature>
<feature type="strand" evidence="13">
    <location>
        <begin position="89"/>
        <end position="100"/>
    </location>
</feature>
<feature type="turn" evidence="13">
    <location>
        <begin position="101"/>
        <end position="104"/>
    </location>
</feature>
<feature type="strand" evidence="13">
    <location>
        <begin position="105"/>
        <end position="110"/>
    </location>
</feature>
<feature type="strand" evidence="13">
    <location>
        <begin position="113"/>
        <end position="120"/>
    </location>
</feature>
<feature type="strand" evidence="13">
    <location>
        <begin position="127"/>
        <end position="133"/>
    </location>
</feature>
<feature type="turn" evidence="13">
    <location>
        <begin position="137"/>
        <end position="139"/>
    </location>
</feature>
<feature type="strand" evidence="13">
    <location>
        <begin position="141"/>
        <end position="150"/>
    </location>
</feature>
<feature type="helix" evidence="13">
    <location>
        <begin position="153"/>
        <end position="165"/>
    </location>
</feature>
<feature type="helix" evidence="13">
    <location>
        <begin position="170"/>
        <end position="172"/>
    </location>
</feature>
<feature type="helix" evidence="13">
    <location>
        <begin position="178"/>
        <end position="180"/>
    </location>
</feature>
<feature type="turn" evidence="13">
    <location>
        <begin position="184"/>
        <end position="186"/>
    </location>
</feature>
<keyword id="KW-0002">3D-structure</keyword>
<keyword id="KW-0011">Acute phase</keyword>
<keyword id="KW-1015">Disulfide bond</keyword>
<keyword id="KW-0325">Glycoprotein</keyword>
<keyword id="KW-1267">Proteomics identification</keyword>
<keyword id="KW-0873">Pyrrolidone carboxylic acid</keyword>
<keyword id="KW-1185">Reference proteome</keyword>
<keyword id="KW-0964">Secreted</keyword>
<keyword id="KW-0732">Signal</keyword>
<keyword id="KW-0813">Transport</keyword>
<accession>P19652</accession>
<accession>B2R5L2</accession>
<accession>Q16571</accession>
<accession>Q5T538</accession>
<accession>Q6IB74</accession>
<reference key="1">
    <citation type="journal article" date="1987" name="EMBO J.">
        <title>Structure and expression of the genes coding for human alpha 1-acid glycoprotein.</title>
        <authorList>
            <person name="Dente L."/>
            <person name="Pizza M.G."/>
            <person name="Metspalu A."/>
            <person name="Cortese R."/>
        </authorList>
    </citation>
    <scope>NUCLEOTIDE SEQUENCE [GENOMIC DNA]</scope>
</reference>
<reference key="2">
    <citation type="journal article" date="1988" name="Gene">
        <title>Structure and characterisation of a duplicated human alpha 1 acid glycoprotein gene.</title>
        <authorList>
            <person name="Merritt C.M."/>
            <person name="Board P.G."/>
        </authorList>
    </citation>
    <scope>NUCLEOTIDE SEQUENCE [GENOMIC DNA]</scope>
</reference>
<reference key="3">
    <citation type="journal article" date="2004" name="Nat. Genet.">
        <title>Complete sequencing and characterization of 21,243 full-length human cDNAs.</title>
        <authorList>
            <person name="Ota T."/>
            <person name="Suzuki Y."/>
            <person name="Nishikawa T."/>
            <person name="Otsuki T."/>
            <person name="Sugiyama T."/>
            <person name="Irie R."/>
            <person name="Wakamatsu A."/>
            <person name="Hayashi K."/>
            <person name="Sato H."/>
            <person name="Nagai K."/>
            <person name="Kimura K."/>
            <person name="Makita H."/>
            <person name="Sekine M."/>
            <person name="Obayashi M."/>
            <person name="Nishi T."/>
            <person name="Shibahara T."/>
            <person name="Tanaka T."/>
            <person name="Ishii S."/>
            <person name="Yamamoto J."/>
            <person name="Saito K."/>
            <person name="Kawai Y."/>
            <person name="Isono Y."/>
            <person name="Nakamura Y."/>
            <person name="Nagahari K."/>
            <person name="Murakami K."/>
            <person name="Yasuda T."/>
            <person name="Iwayanagi T."/>
            <person name="Wagatsuma M."/>
            <person name="Shiratori A."/>
            <person name="Sudo H."/>
            <person name="Hosoiri T."/>
            <person name="Kaku Y."/>
            <person name="Kodaira H."/>
            <person name="Kondo H."/>
            <person name="Sugawara M."/>
            <person name="Takahashi M."/>
            <person name="Kanda K."/>
            <person name="Yokoi T."/>
            <person name="Furuya T."/>
            <person name="Kikkawa E."/>
            <person name="Omura Y."/>
            <person name="Abe K."/>
            <person name="Kamihara K."/>
            <person name="Katsuta N."/>
            <person name="Sato K."/>
            <person name="Tanikawa M."/>
            <person name="Yamazaki M."/>
            <person name="Ninomiya K."/>
            <person name="Ishibashi T."/>
            <person name="Yamashita H."/>
            <person name="Murakawa K."/>
            <person name="Fujimori K."/>
            <person name="Tanai H."/>
            <person name="Kimata M."/>
            <person name="Watanabe M."/>
            <person name="Hiraoka S."/>
            <person name="Chiba Y."/>
            <person name="Ishida S."/>
            <person name="Ono Y."/>
            <person name="Takiguchi S."/>
            <person name="Watanabe S."/>
            <person name="Yosida M."/>
            <person name="Hotuta T."/>
            <person name="Kusano J."/>
            <person name="Kanehori K."/>
            <person name="Takahashi-Fujii A."/>
            <person name="Hara H."/>
            <person name="Tanase T.-O."/>
            <person name="Nomura Y."/>
            <person name="Togiya S."/>
            <person name="Komai F."/>
            <person name="Hara R."/>
            <person name="Takeuchi K."/>
            <person name="Arita M."/>
            <person name="Imose N."/>
            <person name="Musashino K."/>
            <person name="Yuuki H."/>
            <person name="Oshima A."/>
            <person name="Sasaki N."/>
            <person name="Aotsuka S."/>
            <person name="Yoshikawa Y."/>
            <person name="Matsunawa H."/>
            <person name="Ichihara T."/>
            <person name="Shiohata N."/>
            <person name="Sano S."/>
            <person name="Moriya S."/>
            <person name="Momiyama H."/>
            <person name="Satoh N."/>
            <person name="Takami S."/>
            <person name="Terashima Y."/>
            <person name="Suzuki O."/>
            <person name="Nakagawa S."/>
            <person name="Senoh A."/>
            <person name="Mizoguchi H."/>
            <person name="Goto Y."/>
            <person name="Shimizu F."/>
            <person name="Wakebe H."/>
            <person name="Hishigaki H."/>
            <person name="Watanabe T."/>
            <person name="Sugiyama A."/>
            <person name="Takemoto M."/>
            <person name="Kawakami B."/>
            <person name="Yamazaki M."/>
            <person name="Watanabe K."/>
            <person name="Kumagai A."/>
            <person name="Itakura S."/>
            <person name="Fukuzumi Y."/>
            <person name="Fujimori Y."/>
            <person name="Komiyama M."/>
            <person name="Tashiro H."/>
            <person name="Tanigami A."/>
            <person name="Fujiwara T."/>
            <person name="Ono T."/>
            <person name="Yamada K."/>
            <person name="Fujii Y."/>
            <person name="Ozaki K."/>
            <person name="Hirao M."/>
            <person name="Ohmori Y."/>
            <person name="Kawabata A."/>
            <person name="Hikiji T."/>
            <person name="Kobatake N."/>
            <person name="Inagaki H."/>
            <person name="Ikema Y."/>
            <person name="Okamoto S."/>
            <person name="Okitani R."/>
            <person name="Kawakami T."/>
            <person name="Noguchi S."/>
            <person name="Itoh T."/>
            <person name="Shigeta K."/>
            <person name="Senba T."/>
            <person name="Matsumura K."/>
            <person name="Nakajima Y."/>
            <person name="Mizuno T."/>
            <person name="Morinaga M."/>
            <person name="Sasaki M."/>
            <person name="Togashi T."/>
            <person name="Oyama M."/>
            <person name="Hata H."/>
            <person name="Watanabe M."/>
            <person name="Komatsu T."/>
            <person name="Mizushima-Sugano J."/>
            <person name="Satoh T."/>
            <person name="Shirai Y."/>
            <person name="Takahashi Y."/>
            <person name="Nakagawa K."/>
            <person name="Okumura K."/>
            <person name="Nagase T."/>
            <person name="Nomura N."/>
            <person name="Kikuchi H."/>
            <person name="Masuho Y."/>
            <person name="Yamashita R."/>
            <person name="Nakai K."/>
            <person name="Yada T."/>
            <person name="Nakamura Y."/>
            <person name="Ohara O."/>
            <person name="Isogai T."/>
            <person name="Sugano S."/>
        </authorList>
    </citation>
    <scope>NUCLEOTIDE SEQUENCE [LARGE SCALE MRNA]</scope>
    <source>
        <tissue>Liver</tissue>
    </source>
</reference>
<reference key="4">
    <citation type="submission" date="2004-06" db="EMBL/GenBank/DDBJ databases">
        <title>Cloning of human full open reading frames in Gateway(TM) system entry vector (pDONR201).</title>
        <authorList>
            <person name="Ebert L."/>
            <person name="Schick M."/>
            <person name="Neubert P."/>
            <person name="Schatten R."/>
            <person name="Henze S."/>
            <person name="Korn B."/>
        </authorList>
    </citation>
    <scope>NUCLEOTIDE SEQUENCE [LARGE SCALE MRNA]</scope>
</reference>
<reference key="5">
    <citation type="journal article" date="2004" name="Nature">
        <title>DNA sequence and analysis of human chromosome 9.</title>
        <authorList>
            <person name="Humphray S.J."/>
            <person name="Oliver K."/>
            <person name="Hunt A.R."/>
            <person name="Plumb R.W."/>
            <person name="Loveland J.E."/>
            <person name="Howe K.L."/>
            <person name="Andrews T.D."/>
            <person name="Searle S."/>
            <person name="Hunt S.E."/>
            <person name="Scott C.E."/>
            <person name="Jones M.C."/>
            <person name="Ainscough R."/>
            <person name="Almeida J.P."/>
            <person name="Ambrose K.D."/>
            <person name="Ashwell R.I.S."/>
            <person name="Babbage A.K."/>
            <person name="Babbage S."/>
            <person name="Bagguley C.L."/>
            <person name="Bailey J."/>
            <person name="Banerjee R."/>
            <person name="Barker D.J."/>
            <person name="Barlow K.F."/>
            <person name="Bates K."/>
            <person name="Beasley H."/>
            <person name="Beasley O."/>
            <person name="Bird C.P."/>
            <person name="Bray-Allen S."/>
            <person name="Brown A.J."/>
            <person name="Brown J.Y."/>
            <person name="Burford D."/>
            <person name="Burrill W."/>
            <person name="Burton J."/>
            <person name="Carder C."/>
            <person name="Carter N.P."/>
            <person name="Chapman J.C."/>
            <person name="Chen Y."/>
            <person name="Clarke G."/>
            <person name="Clark S.Y."/>
            <person name="Clee C.M."/>
            <person name="Clegg S."/>
            <person name="Collier R.E."/>
            <person name="Corby N."/>
            <person name="Crosier M."/>
            <person name="Cummings A.T."/>
            <person name="Davies J."/>
            <person name="Dhami P."/>
            <person name="Dunn M."/>
            <person name="Dutta I."/>
            <person name="Dyer L.W."/>
            <person name="Earthrowl M.E."/>
            <person name="Faulkner L."/>
            <person name="Fleming C.J."/>
            <person name="Frankish A."/>
            <person name="Frankland J.A."/>
            <person name="French L."/>
            <person name="Fricker D.G."/>
            <person name="Garner P."/>
            <person name="Garnett J."/>
            <person name="Ghori J."/>
            <person name="Gilbert J.G.R."/>
            <person name="Glison C."/>
            <person name="Grafham D.V."/>
            <person name="Gribble S."/>
            <person name="Griffiths C."/>
            <person name="Griffiths-Jones S."/>
            <person name="Grocock R."/>
            <person name="Guy J."/>
            <person name="Hall R.E."/>
            <person name="Hammond S."/>
            <person name="Harley J.L."/>
            <person name="Harrison E.S.I."/>
            <person name="Hart E.A."/>
            <person name="Heath P.D."/>
            <person name="Henderson C.D."/>
            <person name="Hopkins B.L."/>
            <person name="Howard P.J."/>
            <person name="Howden P.J."/>
            <person name="Huckle E."/>
            <person name="Johnson C."/>
            <person name="Johnson D."/>
            <person name="Joy A.A."/>
            <person name="Kay M."/>
            <person name="Keenan S."/>
            <person name="Kershaw J.K."/>
            <person name="Kimberley A.M."/>
            <person name="King A."/>
            <person name="Knights A."/>
            <person name="Laird G.K."/>
            <person name="Langford C."/>
            <person name="Lawlor S."/>
            <person name="Leongamornlert D.A."/>
            <person name="Leversha M."/>
            <person name="Lloyd C."/>
            <person name="Lloyd D.M."/>
            <person name="Lovell J."/>
            <person name="Martin S."/>
            <person name="Mashreghi-Mohammadi M."/>
            <person name="Matthews L."/>
            <person name="McLaren S."/>
            <person name="McLay K.E."/>
            <person name="McMurray A."/>
            <person name="Milne S."/>
            <person name="Nickerson T."/>
            <person name="Nisbett J."/>
            <person name="Nordsiek G."/>
            <person name="Pearce A.V."/>
            <person name="Peck A.I."/>
            <person name="Porter K.M."/>
            <person name="Pandian R."/>
            <person name="Pelan S."/>
            <person name="Phillimore B."/>
            <person name="Povey S."/>
            <person name="Ramsey Y."/>
            <person name="Rand V."/>
            <person name="Scharfe M."/>
            <person name="Sehra H.K."/>
            <person name="Shownkeen R."/>
            <person name="Sims S.K."/>
            <person name="Skuce C.D."/>
            <person name="Smith M."/>
            <person name="Steward C.A."/>
            <person name="Swarbreck D."/>
            <person name="Sycamore N."/>
            <person name="Tester J."/>
            <person name="Thorpe A."/>
            <person name="Tracey A."/>
            <person name="Tromans A."/>
            <person name="Thomas D.W."/>
            <person name="Wall M."/>
            <person name="Wallis J.M."/>
            <person name="West A.P."/>
            <person name="Whitehead S.L."/>
            <person name="Willey D.L."/>
            <person name="Williams S.A."/>
            <person name="Wilming L."/>
            <person name="Wray P.W."/>
            <person name="Young L."/>
            <person name="Ashurst J.L."/>
            <person name="Coulson A."/>
            <person name="Blocker H."/>
            <person name="Durbin R.M."/>
            <person name="Sulston J.E."/>
            <person name="Hubbard T."/>
            <person name="Jackson M.J."/>
            <person name="Bentley D.R."/>
            <person name="Beck S."/>
            <person name="Rogers J."/>
            <person name="Dunham I."/>
        </authorList>
    </citation>
    <scope>NUCLEOTIDE SEQUENCE [LARGE SCALE GENOMIC DNA]</scope>
</reference>
<reference key="6">
    <citation type="submission" date="2005-07" db="EMBL/GenBank/DDBJ databases">
        <authorList>
            <person name="Mural R.J."/>
            <person name="Istrail S."/>
            <person name="Sutton G.G."/>
            <person name="Florea L."/>
            <person name="Halpern A.L."/>
            <person name="Mobarry C.M."/>
            <person name="Lippert R."/>
            <person name="Walenz B."/>
            <person name="Shatkay H."/>
            <person name="Dew I."/>
            <person name="Miller J.R."/>
            <person name="Flanigan M.J."/>
            <person name="Edwards N.J."/>
            <person name="Bolanos R."/>
            <person name="Fasulo D."/>
            <person name="Halldorsson B.V."/>
            <person name="Hannenhalli S."/>
            <person name="Turner R."/>
            <person name="Yooseph S."/>
            <person name="Lu F."/>
            <person name="Nusskern D.R."/>
            <person name="Shue B.C."/>
            <person name="Zheng X.H."/>
            <person name="Zhong F."/>
            <person name="Delcher A.L."/>
            <person name="Huson D.H."/>
            <person name="Kravitz S.A."/>
            <person name="Mouchard L."/>
            <person name="Reinert K."/>
            <person name="Remington K.A."/>
            <person name="Clark A.G."/>
            <person name="Waterman M.S."/>
            <person name="Eichler E.E."/>
            <person name="Adams M.D."/>
            <person name="Hunkapiller M.W."/>
            <person name="Myers E.W."/>
            <person name="Venter J.C."/>
        </authorList>
    </citation>
    <scope>NUCLEOTIDE SEQUENCE [LARGE SCALE GENOMIC DNA]</scope>
</reference>
<reference key="7">
    <citation type="journal article" date="2004" name="Genome Res.">
        <title>The status, quality, and expansion of the NIH full-length cDNA project: the Mammalian Gene Collection (MGC).</title>
        <authorList>
            <consortium name="The MGC Project Team"/>
        </authorList>
    </citation>
    <scope>NUCLEOTIDE SEQUENCE [LARGE SCALE MRNA]</scope>
    <source>
        <tissue>Skeletal muscle</tissue>
    </source>
</reference>
<reference key="8">
    <citation type="journal article" date="1974" name="Biochemistry">
        <title>The disulfide bonds of alpha1-acid glycoprotein.</title>
        <authorList>
            <person name="Schmid K."/>
            <person name="Buergi W."/>
            <person name="Collins J.H."/>
            <person name="Nanno S."/>
        </authorList>
    </citation>
    <scope>DISULFIDE BONDS</scope>
</reference>
<reference key="9">
    <citation type="journal article" date="1992" name="Biochem. J.">
        <title>Analysis of the five glycosylation sites of human alpha 1-acid glycoprotein.</title>
        <authorList>
            <person name="Treuheit M.J."/>
            <person name="Costello C.E."/>
            <person name="Halsall H.B."/>
        </authorList>
    </citation>
    <scope>GLYCOSYLATION AT ASN-33; ASN-56; ASN-72; ASN-93 AND ASN-103</scope>
</reference>
<reference key="10">
    <citation type="journal article" date="2004" name="J. Proteome Res.">
        <title>A new strategy for identification of N-glycosylated proteins and unambiguous assignment of their glycosylation sites using HILIC enrichment and partial deglycosylation.</title>
        <authorList>
            <person name="Hagglund P."/>
            <person name="Bunkenborg J."/>
            <person name="Elortza F."/>
            <person name="Jensen O.N."/>
            <person name="Roepstorff P."/>
        </authorList>
    </citation>
    <scope>PYROGLUTAMATE FORMATION AT GLN-19</scope>
    <scope>GLYCOSYLATION AT ASN-33 AND ASN-93</scope>
    <scope>IDENTIFICATION BY MASS SPECTROMETRY</scope>
</reference>
<reference key="11">
    <citation type="journal article" date="2004" name="Mol. Cell. Proteomics">
        <title>A proteomic analysis of human bile.</title>
        <authorList>
            <person name="Kristiansen T.Z."/>
            <person name="Bunkenborg J."/>
            <person name="Gronborg M."/>
            <person name="Molina H."/>
            <person name="Thuluvath P.J."/>
            <person name="Argani P."/>
            <person name="Goggins M.G."/>
            <person name="Maitra A."/>
            <person name="Pandey A."/>
        </authorList>
    </citation>
    <scope>GLYCOSYLATION [LARGE SCALE ANALYSIS] AT ASN-33</scope>
    <source>
        <tissue>Bile</tissue>
    </source>
</reference>
<reference key="12">
    <citation type="journal article" date="2004" name="Proteomics">
        <title>Screening for N-glycosylated proteins by liquid chromatography mass spectrometry.</title>
        <authorList>
            <person name="Bunkenborg J."/>
            <person name="Pilch B.J."/>
            <person name="Podtelejnikov A.V."/>
            <person name="Wisniewski J.R."/>
        </authorList>
    </citation>
    <scope>GLYCOSYLATION [LARGE SCALE ANALYSIS] AT ASN-33; ASN-56; ASN-72 AND ASN-93</scope>
    <source>
        <tissue>Plasma</tissue>
    </source>
</reference>
<reference key="13">
    <citation type="journal article" date="2005" name="J. Proteome Res.">
        <title>Human plasma N-glycoproteome analysis by immunoaffinity subtraction, hydrazide chemistry, and mass spectrometry.</title>
        <authorList>
            <person name="Liu T."/>
            <person name="Qian W.-J."/>
            <person name="Gritsenko M.A."/>
            <person name="Camp D.G. II"/>
            <person name="Monroe M.E."/>
            <person name="Moore R.J."/>
            <person name="Smith R.D."/>
        </authorList>
    </citation>
    <scope>GLYCOSYLATION [LARGE SCALE ANALYSIS] AT ASN-33; ASN-56; ASN-72; ASN-93 AND ASN-103</scope>
    <source>
        <tissue>Plasma</tissue>
    </source>
</reference>
<reference key="14">
    <citation type="journal article" date="2009" name="J. Proteome Res.">
        <title>Glycoproteomics analysis of human liver tissue by combination of multiple enzyme digestion and hydrazide chemistry.</title>
        <authorList>
            <person name="Chen R."/>
            <person name="Jiang X."/>
            <person name="Sun D."/>
            <person name="Han G."/>
            <person name="Wang F."/>
            <person name="Ye M."/>
            <person name="Wang L."/>
            <person name="Zou H."/>
        </authorList>
    </citation>
    <scope>GLYCOSYLATION [LARGE SCALE ANALYSIS] AT ASN-33; ASN-56; ASN-93 AND ASN-103</scope>
    <source>
        <tissue>Liver</tissue>
    </source>
</reference>
<reference key="15">
    <citation type="journal article" date="2009" name="Nat. Methods">
        <title>Enrichment of glycopeptides for glycan structure and attachment site identification.</title>
        <authorList>
            <person name="Nilsson J."/>
            <person name="Rueetschi U."/>
            <person name="Halim A."/>
            <person name="Hesse C."/>
            <person name="Carlsohn E."/>
            <person name="Brinkmalm G."/>
            <person name="Larson G."/>
        </authorList>
    </citation>
    <scope>GLYCOSYLATION [LARGE SCALE ANALYSIS] AT ASN-33</scope>
    <scope>STRUCTURE OF CARBOHYDRATES</scope>
    <source>
        <tissue>Cerebrospinal fluid</tissue>
    </source>
</reference>
<reference key="16">
    <citation type="journal article" date="2012" name="Mol. Cell. Proteomics">
        <title>Human urinary glycoproteomics; attachment site specific analysis of N- and O-linked glycosylations by CID and ECD.</title>
        <authorList>
            <person name="Halim A."/>
            <person name="Nilsson J."/>
            <person name="Ruetschi U."/>
            <person name="Hesse C."/>
            <person name="Larson G."/>
        </authorList>
    </citation>
    <scope>GLYCOSYLATION AT ASN-33</scope>
    <scope>STRUCTURE OF CARBOHYDRATES</scope>
    <scope>IDENTIFICATION BY MASS SPECTROMETRY</scope>
</reference>
<reference key="17">
    <citation type="journal article" date="2011" name="J. Biol. Chem.">
        <title>Structural insights into differences in drug-binding selectivity between two forms of human {alpha}1-acid glycoprotein genetic variants, the A and F1*S forms.</title>
        <authorList>
            <person name="Nishi K."/>
            <person name="Ono T."/>
            <person name="Nakamura T."/>
            <person name="Fukunaga N."/>
            <person name="Izumi M."/>
            <person name="Watanabe H."/>
            <person name="Suenaga A."/>
            <person name="Maruyama T."/>
            <person name="Yamagata Y."/>
            <person name="Curry S."/>
            <person name="Otagiri M."/>
        </authorList>
    </citation>
    <scope>X-RAY CRYSTALLOGRAPHY (2.1 ANGSTROMS) OF 19-201 OF VARIANT ARG-167 IN COMPLEXES WITH DISOPYRAMIDE; AMITRIPTYLINE AND CHLORPROMAZINE</scope>
    <scope>FUNCTION</scope>
    <scope>DISULFIDE BONDS</scope>
    <scope>DOMAIN</scope>
</reference>
<evidence type="ECO:0000269" key="1">
    <source>
    </source>
</evidence>
<evidence type="ECO:0000269" key="2">
    <source>
    </source>
</evidence>
<evidence type="ECO:0000269" key="3">
    <source>
    </source>
</evidence>
<evidence type="ECO:0000269" key="4">
    <source>
    </source>
</evidence>
<evidence type="ECO:0000269" key="5">
    <source>
    </source>
</evidence>
<evidence type="ECO:0000269" key="6">
    <source>
    </source>
</evidence>
<evidence type="ECO:0000269" key="7">
    <source>
    </source>
</evidence>
<evidence type="ECO:0000269" key="8">
    <source>
    </source>
</evidence>
<evidence type="ECO:0000269" key="9">
    <source>
    </source>
</evidence>
<evidence type="ECO:0000305" key="10"/>
<evidence type="ECO:0007829" key="11">
    <source>
        <dbReference type="PDB" id="3APU"/>
    </source>
</evidence>
<evidence type="ECO:0007829" key="12">
    <source>
        <dbReference type="PDB" id="3APX"/>
    </source>
</evidence>
<evidence type="ECO:0007829" key="13">
    <source>
        <dbReference type="PDB" id="7OUB"/>
    </source>
</evidence>
<dbReference type="EMBL" id="X06675">
    <property type="protein sequence ID" value="CAA29874.1"/>
    <property type="status" value="ALT_SEQ"/>
    <property type="molecule type" value="Genomic_DNA"/>
</dbReference>
<dbReference type="EMBL" id="X05780">
    <property type="status" value="NOT_ANNOTATED_CDS"/>
    <property type="molecule type" value="Genomic_DNA"/>
</dbReference>
<dbReference type="EMBL" id="X06674">
    <property type="protein sequence ID" value="CAA29873.2"/>
    <property type="status" value="ALT_SEQ"/>
    <property type="molecule type" value="Genomic_DNA"/>
</dbReference>
<dbReference type="EMBL" id="X06676">
    <property type="protein sequence ID" value="CAA29873.2"/>
    <property type="status" value="JOINED"/>
    <property type="molecule type" value="Genomic_DNA"/>
</dbReference>
<dbReference type="EMBL" id="X06677">
    <property type="protein sequence ID" value="CAA29873.2"/>
    <property type="status" value="JOINED"/>
    <property type="molecule type" value="Genomic_DNA"/>
</dbReference>
<dbReference type="EMBL" id="X06678">
    <property type="protein sequence ID" value="CAA29873.2"/>
    <property type="status" value="JOINED"/>
    <property type="molecule type" value="Genomic_DNA"/>
</dbReference>
<dbReference type="EMBL" id="X06679">
    <property type="protein sequence ID" value="CAA29873.2"/>
    <property type="status" value="JOINED"/>
    <property type="molecule type" value="Genomic_DNA"/>
</dbReference>
<dbReference type="EMBL" id="X06680">
    <property type="protein sequence ID" value="CAA29873.2"/>
    <property type="status" value="JOINED"/>
    <property type="molecule type" value="Genomic_DNA"/>
</dbReference>
<dbReference type="EMBL" id="X05784">
    <property type="status" value="NOT_ANNOTATED_CDS"/>
    <property type="molecule type" value="Genomic_DNA"/>
</dbReference>
<dbReference type="EMBL" id="M21540">
    <property type="protein sequence ID" value="AAA51549.1"/>
    <property type="molecule type" value="Genomic_DNA"/>
</dbReference>
<dbReference type="EMBL" id="AK312226">
    <property type="protein sequence ID" value="BAG35159.1"/>
    <property type="molecule type" value="mRNA"/>
</dbReference>
<dbReference type="EMBL" id="CR456930">
    <property type="protein sequence ID" value="CAG33211.1"/>
    <property type="molecule type" value="mRNA"/>
</dbReference>
<dbReference type="EMBL" id="AL356796">
    <property type="status" value="NOT_ANNOTATED_CDS"/>
    <property type="molecule type" value="Genomic_DNA"/>
</dbReference>
<dbReference type="EMBL" id="CH471090">
    <property type="protein sequence ID" value="EAW87417.1"/>
    <property type="molecule type" value="Genomic_DNA"/>
</dbReference>
<dbReference type="EMBL" id="BC015964">
    <property type="protein sequence ID" value="AAH15964.1"/>
    <property type="molecule type" value="mRNA"/>
</dbReference>
<dbReference type="EMBL" id="BC056239">
    <property type="protein sequence ID" value="AAH56239.1"/>
    <property type="molecule type" value="mRNA"/>
</dbReference>
<dbReference type="CCDS" id="CCDS6804.1"/>
<dbReference type="PIR" id="JT0326">
    <property type="entry name" value="OMHU2"/>
</dbReference>
<dbReference type="RefSeq" id="NP_000599.1">
    <property type="nucleotide sequence ID" value="NM_000608.4"/>
</dbReference>
<dbReference type="PDB" id="3APU">
    <property type="method" value="X-ray"/>
    <property type="resolution" value="2.10 A"/>
    <property type="chains" value="A/B=19-201"/>
</dbReference>
<dbReference type="PDB" id="3APV">
    <property type="method" value="X-ray"/>
    <property type="resolution" value="2.15 A"/>
    <property type="chains" value="A/B=19-201"/>
</dbReference>
<dbReference type="PDB" id="3APW">
    <property type="method" value="X-ray"/>
    <property type="resolution" value="2.20 A"/>
    <property type="chains" value="A/B=19-201"/>
</dbReference>
<dbReference type="PDB" id="3APX">
    <property type="method" value="X-ray"/>
    <property type="resolution" value="2.20 A"/>
    <property type="chains" value="A=19-201"/>
</dbReference>
<dbReference type="PDB" id="7OUB">
    <property type="method" value="X-ray"/>
    <property type="resolution" value="1.82 A"/>
    <property type="chains" value="B=19-190"/>
</dbReference>
<dbReference type="PDBsum" id="3APU"/>
<dbReference type="PDBsum" id="3APV"/>
<dbReference type="PDBsum" id="3APW"/>
<dbReference type="PDBsum" id="3APX"/>
<dbReference type="PDBsum" id="7OUB"/>
<dbReference type="SMR" id="P19652"/>
<dbReference type="BioGRID" id="111047">
    <property type="interactions" value="21"/>
</dbReference>
<dbReference type="FunCoup" id="P19652">
    <property type="interactions" value="81"/>
</dbReference>
<dbReference type="IntAct" id="P19652">
    <property type="interactions" value="15"/>
</dbReference>
<dbReference type="STRING" id="9606.ENSP00000394936"/>
<dbReference type="ChEMBL" id="CHEMBL5958"/>
<dbReference type="DrugBank" id="DB12001">
    <property type="generic name" value="Abemaciclib"/>
</dbReference>
<dbReference type="DrugBank" id="DB11703">
    <property type="generic name" value="Acalabrutinib"/>
</dbReference>
<dbReference type="DrugBank" id="DB00404">
    <property type="generic name" value="Alprazolam"/>
</dbReference>
<dbReference type="DrugBank" id="DB00278">
    <property type="generic name" value="Argatroban"/>
</dbReference>
<dbReference type="DrugBank" id="DB06216">
    <property type="generic name" value="Asenapine"/>
</dbReference>
<dbReference type="DrugBank" id="DB01072">
    <property type="generic name" value="Atazanavir"/>
</dbReference>
<dbReference type="DrugBank" id="DB00289">
    <property type="generic name" value="Atomoxetine"/>
</dbReference>
<dbReference type="DrugBank" id="DB01086">
    <property type="generic name" value="Benzocaine"/>
</dbReference>
<dbReference type="DrugBank" id="DB00748">
    <property type="generic name" value="Carbinoxamine"/>
</dbReference>
<dbReference type="DrugBank" id="DB00608">
    <property type="generic name" value="Chloroquine"/>
</dbReference>
<dbReference type="DrugBank" id="DB00477">
    <property type="generic name" value="Chlorpromazine"/>
</dbReference>
<dbReference type="DrugBank" id="DB00907">
    <property type="generic name" value="Cocaine"/>
</dbReference>
<dbReference type="DrugBank" id="DB08865">
    <property type="generic name" value="Crizotinib"/>
</dbReference>
<dbReference type="DrugBank" id="DB00280">
    <property type="generic name" value="Disopyramide"/>
</dbReference>
<dbReference type="DrugBank" id="DB08930">
    <property type="generic name" value="Dolutegravir"/>
</dbReference>
<dbReference type="DrugBank" id="DB00476">
    <property type="generic name" value="Duloxetine"/>
</dbReference>
<dbReference type="DrugBank" id="DB12147">
    <property type="generic name" value="Erdafitinib"/>
</dbReference>
<dbReference type="DrugBank" id="DB12466">
    <property type="generic name" value="Favipiravir"/>
</dbReference>
<dbReference type="DrugBank" id="DB00813">
    <property type="generic name" value="Fentanyl"/>
</dbReference>
<dbReference type="DrugBank" id="DB00950">
    <property type="generic name" value="Fexofenadine"/>
</dbReference>
<dbReference type="DrugBank" id="DB01195">
    <property type="generic name" value="Flecainide"/>
</dbReference>
<dbReference type="DrugBank" id="DB11978">
    <property type="generic name" value="Glasdegib"/>
</dbReference>
<dbReference type="DrugBank" id="DB00986">
    <property type="generic name" value="Glycopyrronium"/>
</dbReference>
<dbReference type="DrugBank" id="DB01611">
    <property type="generic name" value="Hydroxychloroquine"/>
</dbReference>
<dbReference type="DrugBank" id="DB09053">
    <property type="generic name" value="Ibrutinib"/>
</dbReference>
<dbReference type="DrugBank" id="DB09262">
    <property type="generic name" value="Imidafenacin"/>
</dbReference>
<dbReference type="DrugBank" id="DB00458">
    <property type="generic name" value="Imipramine"/>
</dbReference>
<dbReference type="DrugBank" id="DB00808">
    <property type="generic name" value="Indapamide"/>
</dbReference>
<dbReference type="DrugBank" id="DB00332">
    <property type="generic name" value="Ipratropium"/>
</dbReference>
<dbReference type="DrugBank" id="DB01029">
    <property type="generic name" value="Irbesartan"/>
</dbReference>
<dbReference type="DrugBank" id="DB11757">
    <property type="generic name" value="Istradefylline"/>
</dbReference>
<dbReference type="DrugBank" id="DB00598">
    <property type="generic name" value="Labetalol"/>
</dbReference>
<dbReference type="DrugBank" id="DB00281">
    <property type="generic name" value="Lidocaine"/>
</dbReference>
<dbReference type="DrugBank" id="DB08932">
    <property type="generic name" value="Macitentan"/>
</dbReference>
<dbReference type="DrugBank" id="DB01203">
    <property type="generic name" value="Nadolol"/>
</dbReference>
<dbReference type="DrugBank" id="DB11828">
    <property type="generic name" value="Neratinib"/>
</dbReference>
<dbReference type="DrugBank" id="DB01115">
    <property type="generic name" value="Nifedipine"/>
</dbReference>
<dbReference type="DrugBank" id="DB12005">
    <property type="generic name" value="Nirogacestat"/>
</dbReference>
<dbReference type="DrugBank" id="DB00497">
    <property type="generic name" value="Oxycodone"/>
</dbReference>
<dbReference type="DrugBank" id="DB14582">
    <property type="generic name" value="Patisiran"/>
</dbReference>
<dbReference type="DrugBank" id="DB00960">
    <property type="generic name" value="Pindolol"/>
</dbReference>
<dbReference type="DrugBank" id="DB00409">
    <property type="generic name" value="Remoxipride"/>
</dbReference>
<dbReference type="DrugBank" id="DB01045">
    <property type="generic name" value="Rifampin"/>
</dbReference>
<dbReference type="DrugBank" id="DB14840">
    <property type="generic name" value="Ripretinib"/>
</dbReference>
<dbReference type="DrugBank" id="DB00938">
    <property type="generic name" value="Salmeterol"/>
</dbReference>
<dbReference type="DrugBank" id="DB11689">
    <property type="generic name" value="Selumetinib"/>
</dbReference>
<dbReference type="DrugBank" id="DB01591">
    <property type="generic name" value="Solifenacin"/>
</dbReference>
<dbReference type="DrugBank" id="DB00421">
    <property type="generic name" value="Spironolactone"/>
</dbReference>
<dbReference type="DrugBank" id="DB00857">
    <property type="generic name" value="Terbinafine"/>
</dbReference>
<dbReference type="DrugBank" id="DB00342">
    <property type="generic name" value="Terfenadine"/>
</dbReference>
<dbReference type="DrugBank" id="DB01041">
    <property type="generic name" value="Thalidomide"/>
</dbReference>
<dbReference type="DrugBank" id="DB00512">
    <property type="generic name" value="Vancomycin"/>
</dbReference>
<dbReference type="DrugBank" id="DB11641">
    <property type="generic name" value="Vinflunine"/>
</dbReference>
<dbReference type="DrugBank" id="DB01593">
    <property type="generic name" value="Zinc"/>
</dbReference>
<dbReference type="DrugBank" id="DB14487">
    <property type="generic name" value="Zinc acetate"/>
</dbReference>
<dbReference type="DrugBank" id="DB14533">
    <property type="generic name" value="Zinc chloride"/>
</dbReference>
<dbReference type="DrugBank" id="DB14548">
    <property type="generic name" value="Zinc sulfate, unspecified form"/>
</dbReference>
<dbReference type="GlyConnect" id="14">
    <property type="glycosylation" value="74 N-Linked glycans (6 sites)"/>
</dbReference>
<dbReference type="GlyCosmos" id="P19652">
    <property type="glycosylation" value="6 sites, 98 glycans"/>
</dbReference>
<dbReference type="GlyGen" id="P19652">
    <property type="glycosylation" value="7 sites, 148 N-linked glycans (7 sites)"/>
</dbReference>
<dbReference type="iPTMnet" id="P19652"/>
<dbReference type="PhosphoSitePlus" id="P19652"/>
<dbReference type="BioMuta" id="ORM2"/>
<dbReference type="DMDM" id="231458"/>
<dbReference type="jPOST" id="P19652"/>
<dbReference type="MassIVE" id="P19652"/>
<dbReference type="PaxDb" id="9606-ENSP00000394936"/>
<dbReference type="PeptideAtlas" id="P19652"/>
<dbReference type="ProteomicsDB" id="53685"/>
<dbReference type="Antibodypedia" id="29909">
    <property type="antibodies" value="258 antibodies from 28 providers"/>
</dbReference>
<dbReference type="DNASU" id="5005"/>
<dbReference type="Ensembl" id="ENST00000431067.4">
    <property type="protein sequence ID" value="ENSP00000394936.2"/>
    <property type="gene ID" value="ENSG00000228278.5"/>
</dbReference>
<dbReference type="GeneID" id="5005"/>
<dbReference type="KEGG" id="hsa:5005"/>
<dbReference type="MANE-Select" id="ENST00000431067.4">
    <property type="protein sequence ID" value="ENSP00000394936.2"/>
    <property type="RefSeq nucleotide sequence ID" value="NM_000608.4"/>
    <property type="RefSeq protein sequence ID" value="NP_000599.1"/>
</dbReference>
<dbReference type="UCSC" id="uc004bil.4">
    <property type="organism name" value="human"/>
</dbReference>
<dbReference type="AGR" id="HGNC:8499"/>
<dbReference type="CTD" id="5005"/>
<dbReference type="DisGeNET" id="5005"/>
<dbReference type="GeneCards" id="ORM2"/>
<dbReference type="HGNC" id="HGNC:8499">
    <property type="gene designation" value="ORM2"/>
</dbReference>
<dbReference type="HPA" id="ENSG00000228278">
    <property type="expression patterns" value="Tissue enriched (liver)"/>
</dbReference>
<dbReference type="MIM" id="138610">
    <property type="type" value="gene"/>
</dbReference>
<dbReference type="neXtProt" id="NX_P19652"/>
<dbReference type="OpenTargets" id="ENSG00000228278"/>
<dbReference type="PharmGKB" id="PA32818"/>
<dbReference type="VEuPathDB" id="HostDB:ENSG00000228278"/>
<dbReference type="eggNOG" id="ENOG502S0Q2">
    <property type="taxonomic scope" value="Eukaryota"/>
</dbReference>
<dbReference type="GeneTree" id="ENSGT00390000012130"/>
<dbReference type="HOGENOM" id="CLU_117688_0_0_1"/>
<dbReference type="InParanoid" id="P19652"/>
<dbReference type="OMA" id="NWGLSFY"/>
<dbReference type="OrthoDB" id="9448848at2759"/>
<dbReference type="PAN-GO" id="P19652">
    <property type="GO annotations" value="1 GO annotation based on evolutionary models"/>
</dbReference>
<dbReference type="PhylomeDB" id="P19652"/>
<dbReference type="TreeFam" id="TF343791"/>
<dbReference type="PathwayCommons" id="P19652"/>
<dbReference type="Reactome" id="R-HSA-114608">
    <property type="pathway name" value="Platelet degranulation"/>
</dbReference>
<dbReference type="Reactome" id="R-HSA-6798695">
    <property type="pathway name" value="Neutrophil degranulation"/>
</dbReference>
<dbReference type="SignaLink" id="P19652"/>
<dbReference type="BioGRID-ORCS" id="5005">
    <property type="hits" value="12 hits in 1100 CRISPR screens"/>
</dbReference>
<dbReference type="ChiTaRS" id="ORM2">
    <property type="organism name" value="human"/>
</dbReference>
<dbReference type="EvolutionaryTrace" id="P19652"/>
<dbReference type="GenomeRNAi" id="5005"/>
<dbReference type="Pharos" id="P19652">
    <property type="development level" value="Tbio"/>
</dbReference>
<dbReference type="PRO" id="PR:P19652"/>
<dbReference type="Proteomes" id="UP000005640">
    <property type="component" value="Chromosome 9"/>
</dbReference>
<dbReference type="RNAct" id="P19652">
    <property type="molecule type" value="protein"/>
</dbReference>
<dbReference type="Bgee" id="ENSG00000228278">
    <property type="expression patterns" value="Expressed in right lobe of liver and 98 other cell types or tissues"/>
</dbReference>
<dbReference type="GO" id="GO:0035578">
    <property type="term" value="C:azurophil granule lumen"/>
    <property type="evidence" value="ECO:0000304"/>
    <property type="project" value="Reactome"/>
</dbReference>
<dbReference type="GO" id="GO:0072562">
    <property type="term" value="C:blood microparticle"/>
    <property type="evidence" value="ECO:0007005"/>
    <property type="project" value="UniProtKB"/>
</dbReference>
<dbReference type="GO" id="GO:0062023">
    <property type="term" value="C:collagen-containing extracellular matrix"/>
    <property type="evidence" value="ECO:0007005"/>
    <property type="project" value="BHF-UCL"/>
</dbReference>
<dbReference type="GO" id="GO:0070062">
    <property type="term" value="C:extracellular exosome"/>
    <property type="evidence" value="ECO:0007005"/>
    <property type="project" value="UniProtKB"/>
</dbReference>
<dbReference type="GO" id="GO:0005576">
    <property type="term" value="C:extracellular region"/>
    <property type="evidence" value="ECO:0000304"/>
    <property type="project" value="Reactome"/>
</dbReference>
<dbReference type="GO" id="GO:0005615">
    <property type="term" value="C:extracellular space"/>
    <property type="evidence" value="ECO:0000314"/>
    <property type="project" value="UniProtKB"/>
</dbReference>
<dbReference type="GO" id="GO:0031093">
    <property type="term" value="C:platelet alpha granule lumen"/>
    <property type="evidence" value="ECO:0000304"/>
    <property type="project" value="Reactome"/>
</dbReference>
<dbReference type="GO" id="GO:0035580">
    <property type="term" value="C:specific granule lumen"/>
    <property type="evidence" value="ECO:0000304"/>
    <property type="project" value="Reactome"/>
</dbReference>
<dbReference type="GO" id="GO:0006953">
    <property type="term" value="P:acute-phase response"/>
    <property type="evidence" value="ECO:0000304"/>
    <property type="project" value="ProtInc"/>
</dbReference>
<dbReference type="GO" id="GO:0032731">
    <property type="term" value="P:positive regulation of interleukin-1 beta production"/>
    <property type="evidence" value="ECO:0000314"/>
    <property type="project" value="UniProtKB"/>
</dbReference>
<dbReference type="GO" id="GO:0032732">
    <property type="term" value="P:positive regulation of interleukin-1 production"/>
    <property type="evidence" value="ECO:0000314"/>
    <property type="project" value="UniProtKB"/>
</dbReference>
<dbReference type="GO" id="GO:0032760">
    <property type="term" value="P:positive regulation of tumor necrosis factor production"/>
    <property type="evidence" value="ECO:0000314"/>
    <property type="project" value="UniProtKB"/>
</dbReference>
<dbReference type="GO" id="GO:0002682">
    <property type="term" value="P:regulation of immune system process"/>
    <property type="evidence" value="ECO:0007669"/>
    <property type="project" value="InterPro"/>
</dbReference>
<dbReference type="CDD" id="cd19451">
    <property type="entry name" value="lipocalin_AGP-like"/>
    <property type="match status" value="1"/>
</dbReference>
<dbReference type="FunFam" id="2.40.128.20:FF:000012">
    <property type="entry name" value="Alpha-1-acid glycoprotein 2"/>
    <property type="match status" value="1"/>
</dbReference>
<dbReference type="Gene3D" id="2.40.128.20">
    <property type="match status" value="1"/>
</dbReference>
<dbReference type="InterPro" id="IPR001500">
    <property type="entry name" value="A1A_glycop"/>
</dbReference>
<dbReference type="InterPro" id="IPR012674">
    <property type="entry name" value="Calycin"/>
</dbReference>
<dbReference type="InterPro" id="IPR000566">
    <property type="entry name" value="Lipocln_cytosolic_FA-bd_dom"/>
</dbReference>
<dbReference type="PANTHER" id="PTHR11967">
    <property type="entry name" value="ALPHA-1-ACID GLYCOPROTEIN"/>
    <property type="match status" value="1"/>
</dbReference>
<dbReference type="PANTHER" id="PTHR11967:SF3">
    <property type="entry name" value="ALPHA-1-ACID GLYCOPROTEIN 2"/>
    <property type="match status" value="1"/>
</dbReference>
<dbReference type="Pfam" id="PF00061">
    <property type="entry name" value="Lipocalin"/>
    <property type="match status" value="1"/>
</dbReference>
<dbReference type="PIRSF" id="PIRSF036899">
    <property type="entry name" value="AGP"/>
    <property type="match status" value="1"/>
</dbReference>
<dbReference type="PRINTS" id="PR00708">
    <property type="entry name" value="A1AGLPROTEIN"/>
</dbReference>
<dbReference type="SUPFAM" id="SSF50814">
    <property type="entry name" value="Lipocalins"/>
    <property type="match status" value="1"/>
</dbReference>